<evidence type="ECO:0000255" key="1">
    <source>
        <dbReference type="HAMAP-Rule" id="MF_00501"/>
    </source>
</evidence>
<evidence type="ECO:0000305" key="2"/>
<name>RL31_SHEHH</name>
<reference key="1">
    <citation type="submission" date="2008-01" db="EMBL/GenBank/DDBJ databases">
        <title>Complete sequence of Shewanella halifaxensis HAW-EB4.</title>
        <authorList>
            <consortium name="US DOE Joint Genome Institute"/>
            <person name="Copeland A."/>
            <person name="Lucas S."/>
            <person name="Lapidus A."/>
            <person name="Glavina del Rio T."/>
            <person name="Dalin E."/>
            <person name="Tice H."/>
            <person name="Bruce D."/>
            <person name="Goodwin L."/>
            <person name="Pitluck S."/>
            <person name="Sims D."/>
            <person name="Brettin T."/>
            <person name="Detter J.C."/>
            <person name="Han C."/>
            <person name="Kuske C.R."/>
            <person name="Schmutz J."/>
            <person name="Larimer F."/>
            <person name="Land M."/>
            <person name="Hauser L."/>
            <person name="Kyrpides N."/>
            <person name="Kim E."/>
            <person name="Zhao J.-S."/>
            <person name="Richardson P."/>
        </authorList>
    </citation>
    <scope>NUCLEOTIDE SEQUENCE [LARGE SCALE GENOMIC DNA]</scope>
    <source>
        <strain>HAW-EB4</strain>
    </source>
</reference>
<accession>B0TVU8</accession>
<feature type="chain" id="PRO_1000126732" description="Large ribosomal subunit protein bL31">
    <location>
        <begin position="1"/>
        <end position="70"/>
    </location>
</feature>
<feature type="binding site" evidence="1">
    <location>
        <position position="16"/>
    </location>
    <ligand>
        <name>Zn(2+)</name>
        <dbReference type="ChEBI" id="CHEBI:29105"/>
    </ligand>
</feature>
<feature type="binding site" evidence="1">
    <location>
        <position position="18"/>
    </location>
    <ligand>
        <name>Zn(2+)</name>
        <dbReference type="ChEBI" id="CHEBI:29105"/>
    </ligand>
</feature>
<feature type="binding site" evidence="1">
    <location>
        <position position="37"/>
    </location>
    <ligand>
        <name>Zn(2+)</name>
        <dbReference type="ChEBI" id="CHEBI:29105"/>
    </ligand>
</feature>
<feature type="binding site" evidence="1">
    <location>
        <position position="40"/>
    </location>
    <ligand>
        <name>Zn(2+)</name>
        <dbReference type="ChEBI" id="CHEBI:29105"/>
    </ligand>
</feature>
<dbReference type="EMBL" id="CP000931">
    <property type="protein sequence ID" value="ABZ78401.1"/>
    <property type="molecule type" value="Genomic_DNA"/>
</dbReference>
<dbReference type="RefSeq" id="WP_012156969.1">
    <property type="nucleotide sequence ID" value="NC_010334.1"/>
</dbReference>
<dbReference type="SMR" id="B0TVU8"/>
<dbReference type="STRING" id="458817.Shal_3861"/>
<dbReference type="KEGG" id="shl:Shal_3861"/>
<dbReference type="eggNOG" id="COG0254">
    <property type="taxonomic scope" value="Bacteria"/>
</dbReference>
<dbReference type="HOGENOM" id="CLU_114306_4_3_6"/>
<dbReference type="OrthoDB" id="9803251at2"/>
<dbReference type="Proteomes" id="UP000001317">
    <property type="component" value="Chromosome"/>
</dbReference>
<dbReference type="GO" id="GO:1990904">
    <property type="term" value="C:ribonucleoprotein complex"/>
    <property type="evidence" value="ECO:0007669"/>
    <property type="project" value="UniProtKB-KW"/>
</dbReference>
<dbReference type="GO" id="GO:0005840">
    <property type="term" value="C:ribosome"/>
    <property type="evidence" value="ECO:0007669"/>
    <property type="project" value="UniProtKB-KW"/>
</dbReference>
<dbReference type="GO" id="GO:0046872">
    <property type="term" value="F:metal ion binding"/>
    <property type="evidence" value="ECO:0007669"/>
    <property type="project" value="UniProtKB-KW"/>
</dbReference>
<dbReference type="GO" id="GO:0019843">
    <property type="term" value="F:rRNA binding"/>
    <property type="evidence" value="ECO:0007669"/>
    <property type="project" value="UniProtKB-KW"/>
</dbReference>
<dbReference type="GO" id="GO:0003735">
    <property type="term" value="F:structural constituent of ribosome"/>
    <property type="evidence" value="ECO:0007669"/>
    <property type="project" value="InterPro"/>
</dbReference>
<dbReference type="GO" id="GO:0006412">
    <property type="term" value="P:translation"/>
    <property type="evidence" value="ECO:0007669"/>
    <property type="project" value="UniProtKB-UniRule"/>
</dbReference>
<dbReference type="Gene3D" id="4.10.830.30">
    <property type="entry name" value="Ribosomal protein L31"/>
    <property type="match status" value="1"/>
</dbReference>
<dbReference type="HAMAP" id="MF_00501">
    <property type="entry name" value="Ribosomal_bL31_1"/>
    <property type="match status" value="1"/>
</dbReference>
<dbReference type="InterPro" id="IPR034704">
    <property type="entry name" value="Ribosomal_bL28/bL31-like_sf"/>
</dbReference>
<dbReference type="InterPro" id="IPR002150">
    <property type="entry name" value="Ribosomal_bL31"/>
</dbReference>
<dbReference type="InterPro" id="IPR027491">
    <property type="entry name" value="Ribosomal_bL31_A"/>
</dbReference>
<dbReference type="InterPro" id="IPR042105">
    <property type="entry name" value="Ribosomal_bL31_sf"/>
</dbReference>
<dbReference type="NCBIfam" id="TIGR00105">
    <property type="entry name" value="L31"/>
    <property type="match status" value="1"/>
</dbReference>
<dbReference type="NCBIfam" id="NF000612">
    <property type="entry name" value="PRK00019.1"/>
    <property type="match status" value="1"/>
</dbReference>
<dbReference type="NCBIfam" id="NF001809">
    <property type="entry name" value="PRK00528.1"/>
    <property type="match status" value="1"/>
</dbReference>
<dbReference type="PANTHER" id="PTHR33280">
    <property type="entry name" value="50S RIBOSOMAL PROTEIN L31, CHLOROPLASTIC"/>
    <property type="match status" value="1"/>
</dbReference>
<dbReference type="PANTHER" id="PTHR33280:SF6">
    <property type="entry name" value="LARGE RIBOSOMAL SUBUNIT PROTEIN BL31A"/>
    <property type="match status" value="1"/>
</dbReference>
<dbReference type="Pfam" id="PF01197">
    <property type="entry name" value="Ribosomal_L31"/>
    <property type="match status" value="1"/>
</dbReference>
<dbReference type="PRINTS" id="PR01249">
    <property type="entry name" value="RIBOSOMALL31"/>
</dbReference>
<dbReference type="SUPFAM" id="SSF143800">
    <property type="entry name" value="L28p-like"/>
    <property type="match status" value="1"/>
</dbReference>
<dbReference type="PROSITE" id="PS01143">
    <property type="entry name" value="RIBOSOMAL_L31"/>
    <property type="match status" value="1"/>
</dbReference>
<sequence length="70" mass="7545">MKAGIHPDYAEITATCTCGNVIKINSTVGKDLHLDVCGACHPFYTGTQKVMDTGGRIDKFNKRFGALGKK</sequence>
<keyword id="KW-0479">Metal-binding</keyword>
<keyword id="KW-0687">Ribonucleoprotein</keyword>
<keyword id="KW-0689">Ribosomal protein</keyword>
<keyword id="KW-0694">RNA-binding</keyword>
<keyword id="KW-0699">rRNA-binding</keyword>
<keyword id="KW-0862">Zinc</keyword>
<proteinExistence type="inferred from homology"/>
<protein>
    <recommendedName>
        <fullName evidence="1">Large ribosomal subunit protein bL31</fullName>
    </recommendedName>
    <alternativeName>
        <fullName evidence="2">50S ribosomal protein L31</fullName>
    </alternativeName>
</protein>
<organism>
    <name type="scientific">Shewanella halifaxensis (strain HAW-EB4)</name>
    <dbReference type="NCBI Taxonomy" id="458817"/>
    <lineage>
        <taxon>Bacteria</taxon>
        <taxon>Pseudomonadati</taxon>
        <taxon>Pseudomonadota</taxon>
        <taxon>Gammaproteobacteria</taxon>
        <taxon>Alteromonadales</taxon>
        <taxon>Shewanellaceae</taxon>
        <taxon>Shewanella</taxon>
    </lineage>
</organism>
<gene>
    <name evidence="1" type="primary">rpmE</name>
    <name type="ordered locus">Shal_3861</name>
</gene>
<comment type="function">
    <text evidence="1">Binds the 23S rRNA.</text>
</comment>
<comment type="cofactor">
    <cofactor evidence="1">
        <name>Zn(2+)</name>
        <dbReference type="ChEBI" id="CHEBI:29105"/>
    </cofactor>
    <text evidence="1">Binds 1 zinc ion per subunit.</text>
</comment>
<comment type="subunit">
    <text evidence="1">Part of the 50S ribosomal subunit.</text>
</comment>
<comment type="similarity">
    <text evidence="1">Belongs to the bacterial ribosomal protein bL31 family. Type A subfamily.</text>
</comment>